<organism>
    <name type="scientific">Mycobacterium leprae (strain Br4923)</name>
    <dbReference type="NCBI Taxonomy" id="561304"/>
    <lineage>
        <taxon>Bacteria</taxon>
        <taxon>Bacillati</taxon>
        <taxon>Actinomycetota</taxon>
        <taxon>Actinomycetes</taxon>
        <taxon>Mycobacteriales</taxon>
        <taxon>Mycobacteriaceae</taxon>
        <taxon>Mycobacterium</taxon>
    </lineage>
</organism>
<evidence type="ECO:0000255" key="1">
    <source>
        <dbReference type="HAMAP-Rule" id="MF_02112"/>
    </source>
</evidence>
<evidence type="ECO:0000256" key="2">
    <source>
        <dbReference type="SAM" id="MobiDB-lite"/>
    </source>
</evidence>
<reference key="1">
    <citation type="journal article" date="2009" name="Nat. Genet.">
        <title>Comparative genomic and phylogeographic analysis of Mycobacterium leprae.</title>
        <authorList>
            <person name="Monot M."/>
            <person name="Honore N."/>
            <person name="Garnier T."/>
            <person name="Zidane N."/>
            <person name="Sherafi D."/>
            <person name="Paniz-Mondolfi A."/>
            <person name="Matsuoka M."/>
            <person name="Taylor G.M."/>
            <person name="Donoghue H.D."/>
            <person name="Bouwman A."/>
            <person name="Mays S."/>
            <person name="Watson C."/>
            <person name="Lockwood D."/>
            <person name="Khamispour A."/>
            <person name="Dowlati Y."/>
            <person name="Jianping S."/>
            <person name="Rea T.H."/>
            <person name="Vera-Cabrera L."/>
            <person name="Stefani M.M."/>
            <person name="Banu S."/>
            <person name="Macdonald M."/>
            <person name="Sapkota B.R."/>
            <person name="Spencer J.S."/>
            <person name="Thomas J."/>
            <person name="Harshman K."/>
            <person name="Singh P."/>
            <person name="Busso P."/>
            <person name="Gattiker A."/>
            <person name="Rougemont J."/>
            <person name="Brennan P.J."/>
            <person name="Cole S.T."/>
        </authorList>
    </citation>
    <scope>NUCLEOTIDE SEQUENCE [LARGE SCALE GENOMIC DNA]</scope>
    <source>
        <strain>Br4923</strain>
    </source>
</reference>
<accession>B8ZRF0</accession>
<gene>
    <name evidence="1" type="primary">mpa</name>
    <name type="ordered locus">MLBr01316</name>
</gene>
<sequence>MGESERSEAFNPPREAGMSSGDIAELEQLRREIVVLREQLEHAVGPHGSVRSVRDVHQLEARIDSLTARNSKLMDTLKEARQQLLALREEVDRLGQPPSGYGVLLAAHDDETVDVFTSGRKMRLTCSPNIEVASLRKGQTVRLNEALTVVEAGTFEAVGEVSTLREVLADGHRALVVGHADEERIVCLAEPLVAENLLDGVPGALNDDSRPRKLRPGDSLLVDPKAGYAFERVPKAEVEDLVLEEVPDVSYQDIGGLTRQIEQIRDAVELPFLHKELYREYALRPPKGVLLYGPPGCGKTLIAKAVANSLAKKMAEVRGDDAREAKSYFLNIKGPELLNKFVGETERHIRLIFQRAREKASEGTPVIVFFDEMDSIFRTRGTGVSSDVETTVVPQLLSEIDGVEGLENVIVIGASNREDMIDPAILRPGRLDVKIKIERPDAEAAQDIYSKYLTESLPVHADDLTEFDGDRAACIKAMIEKVVDRMYAEIDDNRFLEVTYANGDKEVMYFKDFNSGAMIQNVVDRAKKNAIKSVLETGQPGLRIQHLLDSIVDEFAENEDLPNTTNPDDWARISGKKGERIVYIRTLVTGKSSSASRAIDTESNLGQYL</sequence>
<feature type="chain" id="PRO_0000396997" description="Proteasome-associated ATPase">
    <location>
        <begin position="1"/>
        <end position="609"/>
    </location>
</feature>
<feature type="region of interest" description="Disordered" evidence="2">
    <location>
        <begin position="1"/>
        <end position="22"/>
    </location>
</feature>
<feature type="region of interest" description="Docks into pockets in the proteasome alpha-ring" evidence="1">
    <location>
        <begin position="608"/>
        <end position="609"/>
    </location>
</feature>
<feature type="coiled-coil region" evidence="1">
    <location>
        <begin position="20"/>
        <end position="96"/>
    </location>
</feature>
<feature type="binding site" evidence="1">
    <location>
        <begin position="296"/>
        <end position="301"/>
    </location>
    <ligand>
        <name>ATP</name>
        <dbReference type="ChEBI" id="CHEBI:30616"/>
    </ligand>
</feature>
<protein>
    <recommendedName>
        <fullName evidence="1">Proteasome-associated ATPase</fullName>
    </recommendedName>
    <alternativeName>
        <fullName evidence="1">AAA ATPase forming ring-shaped complexes</fullName>
        <shortName evidence="1">ARC</shortName>
    </alternativeName>
    <alternativeName>
        <fullName evidence="1">Mycobacterial proteasome ATPase</fullName>
    </alternativeName>
</protein>
<keyword id="KW-0067">ATP-binding</keyword>
<keyword id="KW-0143">Chaperone</keyword>
<keyword id="KW-0175">Coiled coil</keyword>
<keyword id="KW-0547">Nucleotide-binding</keyword>
<keyword id="KW-0647">Proteasome</keyword>
<comment type="function">
    <text evidence="1">ATPase which is responsible for recognizing, binding, unfolding and translocation of pupylated proteins into the bacterial 20S proteasome core particle. May be essential for opening the gate of the 20S proteasome via an interaction with its C-terminus, thereby allowing substrate entry and access to the site of proteolysis. Thus, the C-termini of the proteasomal ATPase may function like a 'key in a lock' to induce gate opening and therefore regulate proteolysis.</text>
</comment>
<comment type="pathway">
    <text evidence="1">Protein degradation; proteasomal Pup-dependent pathway.</text>
</comment>
<comment type="subunit">
    <text evidence="1">Homohexamer. Assembles into a hexameric ring structure that caps the 20S proteasome core. Strongly interacts with the prokaryotic ubiquitin-like protein Pup through a hydrophobic interface; the interacting region of ARC lies in its N-terminal coiled-coil domain. There is one Pup binding site per ARC hexamer ring. Upon ATP-binding, the C-terminus of ARC interacts with the alpha-rings of the proteasome core, possibly by binding to the intersubunit pockets.</text>
</comment>
<comment type="domain">
    <text evidence="1">Consists of three main regions, an N-terminal coiled-coil domain that binds to protein Pup and functions as a docking station, an interdomain involved in ARC hexamerization, and a C-terminal ATPase domain of the AAA type.</text>
</comment>
<comment type="similarity">
    <text evidence="1">Belongs to the AAA ATPase family.</text>
</comment>
<dbReference type="EMBL" id="FM211192">
    <property type="protein sequence ID" value="CAR71411.1"/>
    <property type="molecule type" value="Genomic_DNA"/>
</dbReference>
<dbReference type="SMR" id="B8ZRF0"/>
<dbReference type="KEGG" id="mlb:MLBr01316"/>
<dbReference type="HOGENOM" id="CLU_036054_0_0_11"/>
<dbReference type="UniPathway" id="UPA00997"/>
<dbReference type="Proteomes" id="UP000006900">
    <property type="component" value="Chromosome"/>
</dbReference>
<dbReference type="GO" id="GO:0000502">
    <property type="term" value="C:proteasome complex"/>
    <property type="evidence" value="ECO:0007669"/>
    <property type="project" value="UniProtKB-KW"/>
</dbReference>
<dbReference type="GO" id="GO:0005524">
    <property type="term" value="F:ATP binding"/>
    <property type="evidence" value="ECO:0007669"/>
    <property type="project" value="UniProtKB-UniRule"/>
</dbReference>
<dbReference type="GO" id="GO:0016887">
    <property type="term" value="F:ATP hydrolysis activity"/>
    <property type="evidence" value="ECO:0007669"/>
    <property type="project" value="UniProtKB-UniRule"/>
</dbReference>
<dbReference type="GO" id="GO:0019941">
    <property type="term" value="P:modification-dependent protein catabolic process"/>
    <property type="evidence" value="ECO:0007669"/>
    <property type="project" value="InterPro"/>
</dbReference>
<dbReference type="GO" id="GO:0010498">
    <property type="term" value="P:proteasomal protein catabolic process"/>
    <property type="evidence" value="ECO:0007669"/>
    <property type="project" value="InterPro"/>
</dbReference>
<dbReference type="FunFam" id="1.20.5.170:FF:000018">
    <property type="entry name" value="AAA ATPase forming ring-shaped complexes"/>
    <property type="match status" value="1"/>
</dbReference>
<dbReference type="FunFam" id="2.40.50.140:FF:000169">
    <property type="entry name" value="AAA ATPase forming ring-shaped complexes"/>
    <property type="match status" value="1"/>
</dbReference>
<dbReference type="FunFam" id="3.40.50.300:FF:000155">
    <property type="entry name" value="AAA ATPase forming ring-shaped complexes"/>
    <property type="match status" value="1"/>
</dbReference>
<dbReference type="Gene3D" id="1.10.8.60">
    <property type="match status" value="1"/>
</dbReference>
<dbReference type="Gene3D" id="1.20.5.170">
    <property type="match status" value="1"/>
</dbReference>
<dbReference type="Gene3D" id="2.40.50.140">
    <property type="entry name" value="Nucleic acid-binding proteins"/>
    <property type="match status" value="2"/>
</dbReference>
<dbReference type="Gene3D" id="3.40.50.300">
    <property type="entry name" value="P-loop containing nucleotide triphosphate hydrolases"/>
    <property type="match status" value="1"/>
</dbReference>
<dbReference type="HAMAP" id="MF_02112">
    <property type="entry name" value="ARC_ATPase"/>
    <property type="match status" value="1"/>
</dbReference>
<dbReference type="InterPro" id="IPR003593">
    <property type="entry name" value="AAA+_ATPase"/>
</dbReference>
<dbReference type="InterPro" id="IPR050168">
    <property type="entry name" value="AAA_ATPase_domain"/>
</dbReference>
<dbReference type="InterPro" id="IPR003959">
    <property type="entry name" value="ATPase_AAA_core"/>
</dbReference>
<dbReference type="InterPro" id="IPR003960">
    <property type="entry name" value="ATPase_AAA_CS"/>
</dbReference>
<dbReference type="InterPro" id="IPR012340">
    <property type="entry name" value="NA-bd_OB-fold"/>
</dbReference>
<dbReference type="InterPro" id="IPR027417">
    <property type="entry name" value="P-loop_NTPase"/>
</dbReference>
<dbReference type="InterPro" id="IPR032501">
    <property type="entry name" value="Prot_ATP_ID_OB_2nd"/>
</dbReference>
<dbReference type="InterPro" id="IPR041626">
    <property type="entry name" value="Prot_ATP_ID_OB_N"/>
</dbReference>
<dbReference type="InterPro" id="IPR022482">
    <property type="entry name" value="Proteasome_ATPase"/>
</dbReference>
<dbReference type="NCBIfam" id="TIGR03689">
    <property type="entry name" value="pup_AAA"/>
    <property type="match status" value="1"/>
</dbReference>
<dbReference type="PANTHER" id="PTHR23077">
    <property type="entry name" value="AAA-FAMILY ATPASE"/>
    <property type="match status" value="1"/>
</dbReference>
<dbReference type="PANTHER" id="PTHR23077:SF144">
    <property type="entry name" value="PROTEASOME-ASSOCIATED ATPASE"/>
    <property type="match status" value="1"/>
</dbReference>
<dbReference type="Pfam" id="PF00004">
    <property type="entry name" value="AAA"/>
    <property type="match status" value="1"/>
</dbReference>
<dbReference type="Pfam" id="PF16450">
    <property type="entry name" value="Prot_ATP_ID_OB_C"/>
    <property type="match status" value="1"/>
</dbReference>
<dbReference type="Pfam" id="PF17758">
    <property type="entry name" value="Prot_ATP_ID_OB_N"/>
    <property type="match status" value="1"/>
</dbReference>
<dbReference type="SMART" id="SM00382">
    <property type="entry name" value="AAA"/>
    <property type="match status" value="1"/>
</dbReference>
<dbReference type="SUPFAM" id="SSF52540">
    <property type="entry name" value="P-loop containing nucleoside triphosphate hydrolases"/>
    <property type="match status" value="1"/>
</dbReference>
<dbReference type="PROSITE" id="PS00674">
    <property type="entry name" value="AAA"/>
    <property type="match status" value="1"/>
</dbReference>
<proteinExistence type="inferred from homology"/>
<name>ARC_MYCLB</name>